<dbReference type="EC" id="2.3.1.47" evidence="1"/>
<dbReference type="EMBL" id="BX571864">
    <property type="protein sequence ID" value="CAE13779.1"/>
    <property type="molecule type" value="Genomic_DNA"/>
</dbReference>
<dbReference type="RefSeq" id="WP_011145788.1">
    <property type="nucleotide sequence ID" value="NC_005126.1"/>
</dbReference>
<dbReference type="SMR" id="Q7N6Q6"/>
<dbReference type="STRING" id="243265.plu1486"/>
<dbReference type="GeneID" id="48847777"/>
<dbReference type="KEGG" id="plu:plu1486"/>
<dbReference type="eggNOG" id="COG0156">
    <property type="taxonomic scope" value="Bacteria"/>
</dbReference>
<dbReference type="HOGENOM" id="CLU_015846_11_2_6"/>
<dbReference type="OrthoDB" id="9807157at2"/>
<dbReference type="UniPathway" id="UPA00078"/>
<dbReference type="Proteomes" id="UP000002514">
    <property type="component" value="Chromosome"/>
</dbReference>
<dbReference type="GO" id="GO:0008710">
    <property type="term" value="F:8-amino-7-oxononanoate synthase activity"/>
    <property type="evidence" value="ECO:0007669"/>
    <property type="project" value="UniProtKB-UniRule"/>
</dbReference>
<dbReference type="GO" id="GO:0030170">
    <property type="term" value="F:pyridoxal phosphate binding"/>
    <property type="evidence" value="ECO:0007669"/>
    <property type="project" value="UniProtKB-UniRule"/>
</dbReference>
<dbReference type="GO" id="GO:0009102">
    <property type="term" value="P:biotin biosynthetic process"/>
    <property type="evidence" value="ECO:0007669"/>
    <property type="project" value="UniProtKB-UniRule"/>
</dbReference>
<dbReference type="CDD" id="cd06454">
    <property type="entry name" value="KBL_like"/>
    <property type="match status" value="1"/>
</dbReference>
<dbReference type="Gene3D" id="3.90.1150.10">
    <property type="entry name" value="Aspartate Aminotransferase, domain 1"/>
    <property type="match status" value="1"/>
</dbReference>
<dbReference type="Gene3D" id="3.40.640.10">
    <property type="entry name" value="Type I PLP-dependent aspartate aminotransferase-like (Major domain)"/>
    <property type="match status" value="1"/>
</dbReference>
<dbReference type="HAMAP" id="MF_01693">
    <property type="entry name" value="BioF_aminotrans_2"/>
    <property type="match status" value="1"/>
</dbReference>
<dbReference type="InterPro" id="IPR001917">
    <property type="entry name" value="Aminotrans_II_pyridoxalP_BS"/>
</dbReference>
<dbReference type="InterPro" id="IPR004839">
    <property type="entry name" value="Aminotransferase_I/II_large"/>
</dbReference>
<dbReference type="InterPro" id="IPR050087">
    <property type="entry name" value="AON_synthase_class-II"/>
</dbReference>
<dbReference type="InterPro" id="IPR004723">
    <property type="entry name" value="AONS_Archaea/Proteobacteria"/>
</dbReference>
<dbReference type="InterPro" id="IPR022834">
    <property type="entry name" value="AONS_Proteobacteria"/>
</dbReference>
<dbReference type="InterPro" id="IPR015424">
    <property type="entry name" value="PyrdxlP-dep_Trfase"/>
</dbReference>
<dbReference type="InterPro" id="IPR015421">
    <property type="entry name" value="PyrdxlP-dep_Trfase_major"/>
</dbReference>
<dbReference type="InterPro" id="IPR015422">
    <property type="entry name" value="PyrdxlP-dep_Trfase_small"/>
</dbReference>
<dbReference type="NCBIfam" id="TIGR00858">
    <property type="entry name" value="bioF"/>
    <property type="match status" value="1"/>
</dbReference>
<dbReference type="PANTHER" id="PTHR13693:SF100">
    <property type="entry name" value="8-AMINO-7-OXONONANOATE SYNTHASE"/>
    <property type="match status" value="1"/>
</dbReference>
<dbReference type="PANTHER" id="PTHR13693">
    <property type="entry name" value="CLASS II AMINOTRANSFERASE/8-AMINO-7-OXONONANOATE SYNTHASE"/>
    <property type="match status" value="1"/>
</dbReference>
<dbReference type="Pfam" id="PF00155">
    <property type="entry name" value="Aminotran_1_2"/>
    <property type="match status" value="1"/>
</dbReference>
<dbReference type="SUPFAM" id="SSF53383">
    <property type="entry name" value="PLP-dependent transferases"/>
    <property type="match status" value="1"/>
</dbReference>
<dbReference type="PROSITE" id="PS00599">
    <property type="entry name" value="AA_TRANSFER_CLASS_2"/>
    <property type="match status" value="1"/>
</dbReference>
<proteinExistence type="inferred from homology"/>
<evidence type="ECO:0000255" key="1">
    <source>
        <dbReference type="HAMAP-Rule" id="MF_01693"/>
    </source>
</evidence>
<gene>
    <name evidence="1" type="primary">bioF</name>
    <name type="ordered locus">plu1486</name>
</gene>
<organism>
    <name type="scientific">Photorhabdus laumondii subsp. laumondii (strain DSM 15139 / CIP 105565 / TT01)</name>
    <name type="common">Photorhabdus luminescens subsp. laumondii</name>
    <dbReference type="NCBI Taxonomy" id="243265"/>
    <lineage>
        <taxon>Bacteria</taxon>
        <taxon>Pseudomonadati</taxon>
        <taxon>Pseudomonadota</taxon>
        <taxon>Gammaproteobacteria</taxon>
        <taxon>Enterobacterales</taxon>
        <taxon>Morganellaceae</taxon>
        <taxon>Photorhabdus</taxon>
    </lineage>
</organism>
<comment type="function">
    <text evidence="1">Catalyzes the decarboxylative condensation of pimeloyl-[acyl-carrier protein] and L-alanine to produce 8-amino-7-oxononanoate (AON), [acyl-carrier protein], and carbon dioxide.</text>
</comment>
<comment type="catalytic activity">
    <reaction evidence="1">
        <text>6-carboxyhexanoyl-[ACP] + L-alanine + H(+) = (8S)-8-amino-7-oxononanoate + holo-[ACP] + CO2</text>
        <dbReference type="Rhea" id="RHEA:42288"/>
        <dbReference type="Rhea" id="RHEA-COMP:9685"/>
        <dbReference type="Rhea" id="RHEA-COMP:9955"/>
        <dbReference type="ChEBI" id="CHEBI:15378"/>
        <dbReference type="ChEBI" id="CHEBI:16526"/>
        <dbReference type="ChEBI" id="CHEBI:57972"/>
        <dbReference type="ChEBI" id="CHEBI:64479"/>
        <dbReference type="ChEBI" id="CHEBI:78846"/>
        <dbReference type="ChEBI" id="CHEBI:149468"/>
        <dbReference type="EC" id="2.3.1.47"/>
    </reaction>
</comment>
<comment type="cofactor">
    <cofactor evidence="1">
        <name>pyridoxal 5'-phosphate</name>
        <dbReference type="ChEBI" id="CHEBI:597326"/>
    </cofactor>
</comment>
<comment type="pathway">
    <text evidence="1">Cofactor biosynthesis; biotin biosynthesis.</text>
</comment>
<comment type="subunit">
    <text evidence="1">Homodimer.</text>
</comment>
<comment type="similarity">
    <text evidence="1">Belongs to the class-II pyridoxal-phosphate-dependent aminotransferase family. BioF subfamily.</text>
</comment>
<name>BIOF_PHOLL</name>
<sequence>MDWSSYLSRQLSERRSTSLWRQRQVNQKSDGRFLYAADGKYLNFSSNDYLGLSANPAIISAWQRGAEQYGVGSGGSGHITGYTKAHQLLEQQLADWLGYPKALLFISGYSANQGVIAALMTEQDRIIADRLSHASLMEAAMHSPAQLRRFLHNQPESLANLLATPCVGKTLVVTEGVFSMDGDCAPLADIHQQTRISGNWLMVDDAHGIGVCGEQGRGSCWQQKVKPEILIVTFGKAFGLSGAAVLCDEQTAEYLIQYARHLIYSTSMPPAQAQALSEAVRQIQSGDELRQRLQQNINYFRRQAQKLPFNLTDSTTAIQPLIVSDNELSVSLSQSLQQKGIWVKAIRPPTVPPGSARLRITLTASHMPQDIDMLMEALHGFRS</sequence>
<protein>
    <recommendedName>
        <fullName evidence="1">8-amino-7-oxononanoate synthase</fullName>
        <shortName evidence="1">AONS</shortName>
        <ecNumber evidence="1">2.3.1.47</ecNumber>
    </recommendedName>
    <alternativeName>
        <fullName evidence="1">7-keto-8-amino-pelargonic acid synthase</fullName>
        <shortName evidence="1">7-KAP synthase</shortName>
        <shortName evidence="1">KAPA synthase</shortName>
    </alternativeName>
    <alternativeName>
        <fullName evidence="1">8-amino-7-ketopelargonate synthase</fullName>
    </alternativeName>
</protein>
<reference key="1">
    <citation type="journal article" date="2003" name="Nat. Biotechnol.">
        <title>The genome sequence of the entomopathogenic bacterium Photorhabdus luminescens.</title>
        <authorList>
            <person name="Duchaud E."/>
            <person name="Rusniok C."/>
            <person name="Frangeul L."/>
            <person name="Buchrieser C."/>
            <person name="Givaudan A."/>
            <person name="Taourit S."/>
            <person name="Bocs S."/>
            <person name="Boursaux-Eude C."/>
            <person name="Chandler M."/>
            <person name="Charles J.-F."/>
            <person name="Dassa E."/>
            <person name="Derose R."/>
            <person name="Derzelle S."/>
            <person name="Freyssinet G."/>
            <person name="Gaudriault S."/>
            <person name="Medigue C."/>
            <person name="Lanois A."/>
            <person name="Powell K."/>
            <person name="Siguier P."/>
            <person name="Vincent R."/>
            <person name="Wingate V."/>
            <person name="Zouine M."/>
            <person name="Glaser P."/>
            <person name="Boemare N."/>
            <person name="Danchin A."/>
            <person name="Kunst F."/>
        </authorList>
    </citation>
    <scope>NUCLEOTIDE SEQUENCE [LARGE SCALE GENOMIC DNA]</scope>
    <source>
        <strain>DSM 15139 / CIP 105565 / TT01</strain>
    </source>
</reference>
<feature type="chain" id="PRO_0000381065" description="8-amino-7-oxononanoate synthase">
    <location>
        <begin position="1"/>
        <end position="383"/>
    </location>
</feature>
<feature type="binding site" evidence="1">
    <location>
        <position position="21"/>
    </location>
    <ligand>
        <name>substrate</name>
    </ligand>
</feature>
<feature type="binding site" evidence="1">
    <location>
        <begin position="108"/>
        <end position="109"/>
    </location>
    <ligand>
        <name>pyridoxal 5'-phosphate</name>
        <dbReference type="ChEBI" id="CHEBI:597326"/>
    </ligand>
</feature>
<feature type="binding site" evidence="1">
    <location>
        <position position="133"/>
    </location>
    <ligand>
        <name>substrate</name>
    </ligand>
</feature>
<feature type="binding site" evidence="1">
    <location>
        <position position="179"/>
    </location>
    <ligand>
        <name>pyridoxal 5'-phosphate</name>
        <dbReference type="ChEBI" id="CHEBI:597326"/>
    </ligand>
</feature>
<feature type="binding site" evidence="1">
    <location>
        <position position="207"/>
    </location>
    <ligand>
        <name>pyridoxal 5'-phosphate</name>
        <dbReference type="ChEBI" id="CHEBI:597326"/>
    </ligand>
</feature>
<feature type="binding site" evidence="1">
    <location>
        <position position="233"/>
    </location>
    <ligand>
        <name>pyridoxal 5'-phosphate</name>
        <dbReference type="ChEBI" id="CHEBI:597326"/>
    </ligand>
</feature>
<feature type="binding site" evidence="1">
    <location>
        <position position="350"/>
    </location>
    <ligand>
        <name>substrate</name>
    </ligand>
</feature>
<feature type="modified residue" description="N6-(pyridoxal phosphate)lysine" evidence="1">
    <location>
        <position position="236"/>
    </location>
</feature>
<keyword id="KW-0093">Biotin biosynthesis</keyword>
<keyword id="KW-0663">Pyridoxal phosphate</keyword>
<keyword id="KW-1185">Reference proteome</keyword>
<keyword id="KW-0808">Transferase</keyword>
<accession>Q7N6Q6</accession>